<protein>
    <recommendedName>
        <fullName>Otogelin</fullName>
    </recommendedName>
</protein>
<keyword id="KW-0025">Alternative splicing</keyword>
<keyword id="KW-1003">Cell membrane</keyword>
<keyword id="KW-0209">Deafness</keyword>
<keyword id="KW-0225">Disease variant</keyword>
<keyword id="KW-1015">Disulfide bond</keyword>
<keyword id="KW-0245">EGF-like domain</keyword>
<keyword id="KW-0325">Glycoprotein</keyword>
<keyword id="KW-0472">Membrane</keyword>
<keyword id="KW-1010">Non-syndromic deafness</keyword>
<keyword id="KW-1267">Proteomics identification</keyword>
<keyword id="KW-1185">Reference proteome</keyword>
<keyword id="KW-0677">Repeat</keyword>
<keyword id="KW-0964">Secreted</keyword>
<keyword id="KW-0732">Signal</keyword>
<reference key="1">
    <citation type="journal article" date="2004" name="Nat. Genet.">
        <title>Complete sequencing and characterization of 21,243 full-length human cDNAs.</title>
        <authorList>
            <person name="Ota T."/>
            <person name="Suzuki Y."/>
            <person name="Nishikawa T."/>
            <person name="Otsuki T."/>
            <person name="Sugiyama T."/>
            <person name="Irie R."/>
            <person name="Wakamatsu A."/>
            <person name="Hayashi K."/>
            <person name="Sato H."/>
            <person name="Nagai K."/>
            <person name="Kimura K."/>
            <person name="Makita H."/>
            <person name="Sekine M."/>
            <person name="Obayashi M."/>
            <person name="Nishi T."/>
            <person name="Shibahara T."/>
            <person name="Tanaka T."/>
            <person name="Ishii S."/>
            <person name="Yamamoto J."/>
            <person name="Saito K."/>
            <person name="Kawai Y."/>
            <person name="Isono Y."/>
            <person name="Nakamura Y."/>
            <person name="Nagahari K."/>
            <person name="Murakami K."/>
            <person name="Yasuda T."/>
            <person name="Iwayanagi T."/>
            <person name="Wagatsuma M."/>
            <person name="Shiratori A."/>
            <person name="Sudo H."/>
            <person name="Hosoiri T."/>
            <person name="Kaku Y."/>
            <person name="Kodaira H."/>
            <person name="Kondo H."/>
            <person name="Sugawara M."/>
            <person name="Takahashi M."/>
            <person name="Kanda K."/>
            <person name="Yokoi T."/>
            <person name="Furuya T."/>
            <person name="Kikkawa E."/>
            <person name="Omura Y."/>
            <person name="Abe K."/>
            <person name="Kamihara K."/>
            <person name="Katsuta N."/>
            <person name="Sato K."/>
            <person name="Tanikawa M."/>
            <person name="Yamazaki M."/>
            <person name="Ninomiya K."/>
            <person name="Ishibashi T."/>
            <person name="Yamashita H."/>
            <person name="Murakawa K."/>
            <person name="Fujimori K."/>
            <person name="Tanai H."/>
            <person name="Kimata M."/>
            <person name="Watanabe M."/>
            <person name="Hiraoka S."/>
            <person name="Chiba Y."/>
            <person name="Ishida S."/>
            <person name="Ono Y."/>
            <person name="Takiguchi S."/>
            <person name="Watanabe S."/>
            <person name="Yosida M."/>
            <person name="Hotuta T."/>
            <person name="Kusano J."/>
            <person name="Kanehori K."/>
            <person name="Takahashi-Fujii A."/>
            <person name="Hara H."/>
            <person name="Tanase T.-O."/>
            <person name="Nomura Y."/>
            <person name="Togiya S."/>
            <person name="Komai F."/>
            <person name="Hara R."/>
            <person name="Takeuchi K."/>
            <person name="Arita M."/>
            <person name="Imose N."/>
            <person name="Musashino K."/>
            <person name="Yuuki H."/>
            <person name="Oshima A."/>
            <person name="Sasaki N."/>
            <person name="Aotsuka S."/>
            <person name="Yoshikawa Y."/>
            <person name="Matsunawa H."/>
            <person name="Ichihara T."/>
            <person name="Shiohata N."/>
            <person name="Sano S."/>
            <person name="Moriya S."/>
            <person name="Momiyama H."/>
            <person name="Satoh N."/>
            <person name="Takami S."/>
            <person name="Terashima Y."/>
            <person name="Suzuki O."/>
            <person name="Nakagawa S."/>
            <person name="Senoh A."/>
            <person name="Mizoguchi H."/>
            <person name="Goto Y."/>
            <person name="Shimizu F."/>
            <person name="Wakebe H."/>
            <person name="Hishigaki H."/>
            <person name="Watanabe T."/>
            <person name="Sugiyama A."/>
            <person name="Takemoto M."/>
            <person name="Kawakami B."/>
            <person name="Yamazaki M."/>
            <person name="Watanabe K."/>
            <person name="Kumagai A."/>
            <person name="Itakura S."/>
            <person name="Fukuzumi Y."/>
            <person name="Fujimori Y."/>
            <person name="Komiyama M."/>
            <person name="Tashiro H."/>
            <person name="Tanigami A."/>
            <person name="Fujiwara T."/>
            <person name="Ono T."/>
            <person name="Yamada K."/>
            <person name="Fujii Y."/>
            <person name="Ozaki K."/>
            <person name="Hirao M."/>
            <person name="Ohmori Y."/>
            <person name="Kawabata A."/>
            <person name="Hikiji T."/>
            <person name="Kobatake N."/>
            <person name="Inagaki H."/>
            <person name="Ikema Y."/>
            <person name="Okamoto S."/>
            <person name="Okitani R."/>
            <person name="Kawakami T."/>
            <person name="Noguchi S."/>
            <person name="Itoh T."/>
            <person name="Shigeta K."/>
            <person name="Senba T."/>
            <person name="Matsumura K."/>
            <person name="Nakajima Y."/>
            <person name="Mizuno T."/>
            <person name="Morinaga M."/>
            <person name="Sasaki M."/>
            <person name="Togashi T."/>
            <person name="Oyama M."/>
            <person name="Hata H."/>
            <person name="Watanabe M."/>
            <person name="Komatsu T."/>
            <person name="Mizushima-Sugano J."/>
            <person name="Satoh T."/>
            <person name="Shirai Y."/>
            <person name="Takahashi Y."/>
            <person name="Nakagawa K."/>
            <person name="Okumura K."/>
            <person name="Nagase T."/>
            <person name="Nomura N."/>
            <person name="Kikuchi H."/>
            <person name="Masuho Y."/>
            <person name="Yamashita R."/>
            <person name="Nakai K."/>
            <person name="Yada T."/>
            <person name="Nakamura Y."/>
            <person name="Ohara O."/>
            <person name="Isogai T."/>
            <person name="Sugano S."/>
        </authorList>
    </citation>
    <scope>NUCLEOTIDE SEQUENCE [LARGE SCALE MRNA] (ISOFORM 2)</scope>
    <source>
        <tissue>Testis</tissue>
    </source>
</reference>
<reference key="2">
    <citation type="journal article" date="2006" name="Nature">
        <title>Human chromosome 11 DNA sequence and analysis including novel gene identification.</title>
        <authorList>
            <person name="Taylor T.D."/>
            <person name="Noguchi H."/>
            <person name="Totoki Y."/>
            <person name="Toyoda A."/>
            <person name="Kuroki Y."/>
            <person name="Dewar K."/>
            <person name="Lloyd C."/>
            <person name="Itoh T."/>
            <person name="Takeda T."/>
            <person name="Kim D.-W."/>
            <person name="She X."/>
            <person name="Barlow K.F."/>
            <person name="Bloom T."/>
            <person name="Bruford E."/>
            <person name="Chang J.L."/>
            <person name="Cuomo C.A."/>
            <person name="Eichler E."/>
            <person name="FitzGerald M.G."/>
            <person name="Jaffe D.B."/>
            <person name="LaButti K."/>
            <person name="Nicol R."/>
            <person name="Park H.-S."/>
            <person name="Seaman C."/>
            <person name="Sougnez C."/>
            <person name="Yang X."/>
            <person name="Zimmer A.R."/>
            <person name="Zody M.C."/>
            <person name="Birren B.W."/>
            <person name="Nusbaum C."/>
            <person name="Fujiyama A."/>
            <person name="Hattori M."/>
            <person name="Rogers J."/>
            <person name="Lander E.S."/>
            <person name="Sakaki Y."/>
        </authorList>
    </citation>
    <scope>NUCLEOTIDE SEQUENCE [LARGE SCALE GENOMIC DNA]</scope>
</reference>
<reference key="3">
    <citation type="journal article" date="2012" name="Am. J. Hum. Genet.">
        <title>Mutations of the gene encoding otogelin are a cause of autosomal-recessive nonsyndromic moderate hearing impairment.</title>
        <authorList>
            <person name="Schraders M."/>
            <person name="Ruiz-Palmero L."/>
            <person name="Kalay E."/>
            <person name="Oostrik J."/>
            <person name="del Castillo F.J."/>
            <person name="Sezgin O."/>
            <person name="Beynon A.J."/>
            <person name="Strom T.M."/>
            <person name="Pennings R.J."/>
            <person name="Seco C.Z."/>
            <person name="Oonk A.M."/>
            <person name="Kunst H.P."/>
            <person name="Dominguez-Ruiz M."/>
            <person name="Garcia-Arumi A.M."/>
            <person name="del Campo M."/>
            <person name="Villamar M."/>
            <person name="Hoefsloot L.H."/>
            <person name="Moreno F."/>
            <person name="Admiraal R.J."/>
            <person name="del Castillo I."/>
            <person name="Kremer H."/>
        </authorList>
    </citation>
    <scope>VARIANT DFNB18B LEU-2116</scope>
</reference>
<reference key="4">
    <citation type="journal article" date="2016" name="J. Med. Genet.">
        <title>Deficiency of the myogenic factor MyoD causes a perinatally lethal fetal akinesia.</title>
        <authorList>
            <person name="Watson C.M."/>
            <person name="Crinnion L.A."/>
            <person name="Murphy H."/>
            <person name="Newbould M."/>
            <person name="Harrison S.M."/>
            <person name="Lascelles C."/>
            <person name="Antanaviciute A."/>
            <person name="Carr I.M."/>
            <person name="Sheridan E."/>
            <person name="Bonthron D.T."/>
            <person name="Smith A."/>
        </authorList>
    </citation>
    <scope>VARIANT VAL-1089</scope>
</reference>
<gene>
    <name type="primary">OTOG</name>
    <name type="synonym">OTGN</name>
</gene>
<evidence type="ECO:0000250" key="1"/>
<evidence type="ECO:0000250" key="2">
    <source>
        <dbReference type="UniProtKB" id="O55225"/>
    </source>
</evidence>
<evidence type="ECO:0000255" key="3"/>
<evidence type="ECO:0000255" key="4">
    <source>
        <dbReference type="PROSITE-ProRule" id="PRU00039"/>
    </source>
</evidence>
<evidence type="ECO:0000255" key="5">
    <source>
        <dbReference type="PROSITE-ProRule" id="PRU00076"/>
    </source>
</evidence>
<evidence type="ECO:0000255" key="6">
    <source>
        <dbReference type="PROSITE-ProRule" id="PRU00580"/>
    </source>
</evidence>
<evidence type="ECO:0000256" key="7">
    <source>
        <dbReference type="SAM" id="MobiDB-lite"/>
    </source>
</evidence>
<evidence type="ECO:0000269" key="8">
    <source>
    </source>
</evidence>
<evidence type="ECO:0000269" key="9">
    <source>
    </source>
</evidence>
<evidence type="ECO:0000303" key="10">
    <source>
    </source>
</evidence>
<evidence type="ECO:0000305" key="11"/>
<feature type="signal peptide" evidence="3">
    <location>
        <begin position="1"/>
        <end position="25"/>
    </location>
</feature>
<feature type="chain" id="PRO_0000312148" description="Otogelin">
    <location>
        <begin position="26"/>
        <end position="2925"/>
    </location>
</feature>
<feature type="domain" description="EGF-like" evidence="5">
    <location>
        <begin position="102"/>
        <end position="139"/>
    </location>
</feature>
<feature type="domain" description="VWFD 1" evidence="6">
    <location>
        <begin position="150"/>
        <end position="322"/>
    </location>
</feature>
<feature type="domain" description="VWFD 2" evidence="6">
    <location>
        <begin position="512"/>
        <end position="688"/>
    </location>
</feature>
<feature type="domain" description="TIL" evidence="3">
    <location>
        <begin position="780"/>
        <end position="844"/>
    </location>
</feature>
<feature type="domain" description="VWFD 3" evidence="6">
    <location>
        <begin position="984"/>
        <end position="1152"/>
    </location>
</feature>
<feature type="domain" description="VWFD 4" evidence="6">
    <location>
        <begin position="2110"/>
        <end position="2289"/>
    </location>
</feature>
<feature type="domain" description="CTCK" evidence="4">
    <location>
        <begin position="2840"/>
        <end position="2925"/>
    </location>
</feature>
<feature type="region of interest" description="Disordered" evidence="7">
    <location>
        <begin position="39"/>
        <end position="69"/>
    </location>
</feature>
<feature type="region of interest" description="Disordered" evidence="7">
    <location>
        <begin position="316"/>
        <end position="335"/>
    </location>
</feature>
<feature type="region of interest" description="Disordered" evidence="7">
    <location>
        <begin position="1476"/>
        <end position="1540"/>
    </location>
</feature>
<feature type="region of interest" description="Disordered" evidence="7">
    <location>
        <begin position="1636"/>
        <end position="1679"/>
    </location>
</feature>
<feature type="region of interest" description="Disordered" evidence="7">
    <location>
        <begin position="1693"/>
        <end position="1715"/>
    </location>
</feature>
<feature type="region of interest" description="Disordered" evidence="7">
    <location>
        <begin position="1737"/>
        <end position="1788"/>
    </location>
</feature>
<feature type="compositionally biased region" description="Polar residues" evidence="7">
    <location>
        <begin position="56"/>
        <end position="69"/>
    </location>
</feature>
<feature type="compositionally biased region" description="Polar residues" evidence="7">
    <location>
        <begin position="326"/>
        <end position="335"/>
    </location>
</feature>
<feature type="compositionally biased region" description="Low complexity" evidence="7">
    <location>
        <begin position="1502"/>
        <end position="1528"/>
    </location>
</feature>
<feature type="compositionally biased region" description="Polar residues" evidence="7">
    <location>
        <begin position="1650"/>
        <end position="1659"/>
    </location>
</feature>
<feature type="compositionally biased region" description="Low complexity" evidence="7">
    <location>
        <begin position="1694"/>
        <end position="1708"/>
    </location>
</feature>
<feature type="compositionally biased region" description="Pro residues" evidence="7">
    <location>
        <begin position="1751"/>
        <end position="1764"/>
    </location>
</feature>
<feature type="glycosylation site" description="N-linked (GlcNAc...) asparagine" evidence="3">
    <location>
        <position position="914"/>
    </location>
</feature>
<feature type="glycosylation site" description="N-linked (GlcNAc...) asparagine" evidence="3">
    <location>
        <position position="1478"/>
    </location>
</feature>
<feature type="glycosylation site" description="N-linked (GlcNAc...) asparagine" evidence="3">
    <location>
        <position position="1612"/>
    </location>
</feature>
<feature type="disulfide bond" evidence="5">
    <location>
        <begin position="106"/>
        <end position="120"/>
    </location>
</feature>
<feature type="disulfide bond" evidence="5">
    <location>
        <begin position="114"/>
        <end position="126"/>
    </location>
</feature>
<feature type="disulfide bond" evidence="5">
    <location>
        <begin position="128"/>
        <end position="138"/>
    </location>
</feature>
<feature type="disulfide bond" evidence="6">
    <location>
        <begin position="152"/>
        <end position="285"/>
    </location>
</feature>
<feature type="disulfide bond" evidence="6">
    <location>
        <begin position="199"/>
        <end position="206"/>
    </location>
</feature>
<feature type="disulfide bond" evidence="6">
    <location>
        <begin position="514"/>
        <end position="652"/>
    </location>
</feature>
<feature type="disulfide bond" evidence="6">
    <location>
        <begin position="536"/>
        <end position="687"/>
    </location>
</feature>
<feature type="disulfide bond" evidence="6">
    <location>
        <begin position="558"/>
        <end position="566"/>
    </location>
</feature>
<feature type="disulfide bond" evidence="6">
    <location>
        <begin position="986"/>
        <end position="1115"/>
    </location>
</feature>
<feature type="disulfide bond" evidence="6">
    <location>
        <begin position="1030"/>
        <end position="1037"/>
    </location>
</feature>
<feature type="disulfide bond" evidence="6">
    <location>
        <begin position="2112"/>
        <end position="2249"/>
    </location>
</feature>
<feature type="disulfide bond" evidence="4">
    <location>
        <begin position="2840"/>
        <end position="2889"/>
    </location>
</feature>
<feature type="disulfide bond" evidence="4">
    <location>
        <begin position="2854"/>
        <end position="2903"/>
    </location>
</feature>
<feature type="disulfide bond" evidence="4">
    <location>
        <begin position="2865"/>
        <end position="2920"/>
    </location>
</feature>
<feature type="disulfide bond" evidence="4">
    <location>
        <begin position="2869"/>
        <end position="2922"/>
    </location>
</feature>
<feature type="splice variant" id="VSP_029709" description="In isoform 2." evidence="10">
    <location>
        <begin position="1"/>
        <end position="985"/>
    </location>
</feature>
<feature type="splice variant" id="VSP_029710" description="In isoform 2." evidence="10">
    <original>CTAYGDRHYRTFDGLPFDFVGACKVHLVK</original>
    <variation>MFPARGVPLHLEGEGVFPWGPGDVSLPYL</variation>
    <location>
        <begin position="986"/>
        <end position="1014"/>
    </location>
</feature>
<feature type="splice variant" id="VSP_029711" description="In isoform 2." evidence="10">
    <original>PYDCDFFNKV</original>
    <variation>L</variation>
    <location>
        <begin position="1240"/>
        <end position="1249"/>
    </location>
</feature>
<feature type="splice variant" id="VSP_029712" description="In isoform 2." evidence="10">
    <location>
        <begin position="2434"/>
        <end position="2575"/>
    </location>
</feature>
<feature type="splice variant" id="VSP_029713" description="In isoform 2." evidence="10">
    <original>E</original>
    <variation>G</variation>
    <location>
        <position position="2644"/>
    </location>
</feature>
<feature type="splice variant" id="VSP_029714" description="In isoform 2." evidence="10">
    <location>
        <begin position="2645"/>
        <end position="2925"/>
    </location>
</feature>
<feature type="sequence variant" id="VAR_037406" description="In dbSNP:rs7130190.">
    <original>T</original>
    <variation>S</variation>
    <location>
        <position position="375"/>
    </location>
</feature>
<feature type="sequence variant" id="VAR_061161" description="In dbSNP:rs61611064.">
    <original>A</original>
    <variation>D</variation>
    <location>
        <position position="391"/>
    </location>
</feature>
<feature type="sequence variant" id="VAR_037407" description="In dbSNP:rs7112749.">
    <original>T</original>
    <variation>M</variation>
    <location>
        <position position="659"/>
    </location>
</feature>
<feature type="sequence variant" id="VAR_037408" description="In dbSNP:rs7106548.">
    <original>S</original>
    <variation>P</variation>
    <location>
        <position position="692"/>
    </location>
</feature>
<feature type="sequence variant" id="VAR_037409" description="In dbSNP:rs2355466.">
    <original>A</original>
    <variation>T</variation>
    <location>
        <position position="919"/>
    </location>
</feature>
<feature type="sequence variant" id="VAR_037410" description="In dbSNP:rs11024333.">
    <original>R</original>
    <variation>Q</variation>
    <location>
        <position position="1075"/>
    </location>
</feature>
<feature type="sequence variant" id="VAR_084731" description="In dbSNP:rs56359117." evidence="9">
    <original>I</original>
    <variation>V</variation>
    <location>
        <position position="1089"/>
    </location>
</feature>
<feature type="sequence variant" id="VAR_037411" description="In dbSNP:rs7936324.">
    <original>A</original>
    <variation>V</variation>
    <location>
        <position position="1112"/>
    </location>
</feature>
<feature type="sequence variant" id="VAR_037412" description="In dbSNP:rs7936354.">
    <original>P</original>
    <variation>L</variation>
    <location>
        <position position="1129"/>
    </location>
</feature>
<feature type="sequence variant" id="VAR_037413" description="In dbSNP:rs4491195.">
    <original>A</original>
    <variation>G</variation>
    <location>
        <position position="1399"/>
    </location>
</feature>
<feature type="sequence variant" id="VAR_037414" description="In dbSNP:rs1256306888.">
    <original>P</original>
    <variation>L</variation>
    <location>
        <position position="1646"/>
    </location>
</feature>
<feature type="sequence variant" id="VAR_037415" description="In dbSNP:rs1003490.">
    <original>A</original>
    <variation>V</variation>
    <location>
        <position position="1832"/>
    </location>
</feature>
<feature type="sequence variant" id="VAR_037416" description="In dbSNP:rs7111528.">
    <original>T</original>
    <variation>M</variation>
    <location>
        <position position="1947"/>
    </location>
</feature>
<feature type="sequence variant" id="VAR_047262" description="In dbSNP:rs11024341.">
    <original>A</original>
    <variation>V</variation>
    <location>
        <position position="2006"/>
    </location>
</feature>
<feature type="sequence variant" id="VAR_069250" description="In DFNB18B; dbSNP:rs397514607." evidence="8">
    <original>P</original>
    <variation>L</variation>
    <location>
        <position position="2116"/>
    </location>
</feature>
<feature type="sequence variant" id="VAR_037417" description="In dbSNP:rs12422210.">
    <original>R</original>
    <variation>Q</variation>
    <location>
        <position position="2750"/>
    </location>
</feature>
<feature type="sequence variant" id="VAR_037418" description="In dbSNP:rs11024357.">
    <original>W</original>
    <variation>S</variation>
    <location>
        <position position="2909"/>
    </location>
</feature>
<feature type="sequence conflict" description="In Ref. 1; BAC87330." evidence="11" ref="1">
    <original>A</original>
    <variation>P</variation>
    <location>
        <position position="1375"/>
    </location>
</feature>
<feature type="sequence conflict" description="In Ref. 1; BAC87330." evidence="11" ref="1">
    <original>V</original>
    <variation>A</variation>
    <location>
        <position position="2121"/>
    </location>
</feature>
<accession>Q6ZRI0</accession>
<accession>A8MTX6</accession>
<accession>A8MUJ0</accession>
<accession>B7WPC4</accession>
<sequence length="2925" mass="314794">MGVLASALCWLLCVWLPWGEQAAESLRVQRLGERVVDSGRSGARGMRNVKGMRNGPAQTRVSSSSSHQEATLAMGDKATVVGGQQAEAPDSVAMSSWERRLHRAKCAPSYLFSCFNGGECVHPAFCDCRRFNATGPRCQMVYNAGPERDSICRAWGQHHVETFDGLYYYLSGKGSYTLVGRHEPEGQSFSIQVHNDPQCGSSPYTCSRAVSLFFVGEQEIHLAKEVTHGGMRVQLPHVMGSARLQQLAGYVIVRHQSAFTLAWDGASAVYIKMSPELLGWTHGLCGNNNADPKDDLVTSSGKLTDDVVEFVHSWQEQAPNQPPGPTTSSLPRPPCLQQNPGTMQGVYEQCEALLRPPFDACHAYVSPLPFTASCTSDLCQSMGDVATWCRALAEYARACAQAGRPLQGWRTQLRQCTVHCKEKAFTYNECIACCPASCHPRASCVDSEIACVDGCYCPNGLIFEDGGCVAPAECPCEFHGTLYPPGSVVKEDCNTCTCTSGKWECSTAVCPAECSVTGDIHFTTFDGRRYTFPATCQYILAKSRSSGTFTVTLQNAPCGLNQDGACVQSVSVILHQDPRRQVTLTQAGDVLLFDQYKIIPPYTDDAFEIRRLSSVFLRVRTNVGVRVLYDREGLRLYLQVDQRWVEDTVGLCGTFNGNTQDDFLSPVGVPESTPQLFGNSWKTLSACSPLVSGSPLDPCDVHLQAASYSVQACSVLTGEMFAPCSAFLSPVPYFEQCRRDACRCGQPCLCATLAHYAHLCRRHGLPVDFRARLPACALSCEASKEYSPCVAPCGRTCQDLASPEACGVDGGDDLSRDECVEGCACPPDTYLDTQADLCVPRNQCSCHFQGVDYPPGDSDIPSLGHCHCKDGVMSCDSRAPAAACPAGQVFVNCSDLHTDLELSRERTCEQQLLNLSVSARGPCLSGCACPQGLLRHGDACFLPEECPCTWKGKEYFPGDQVMSPCHTCVCQRGSFQCTLHPCASTCTAYGDRHYRTFDGLPFDFVGACKVHLVKSTSDVSFSVIVENVNCYSSGMICRKFISINVGNSLIVFDDDSGNPSPESFLDDKQEVHTWRVGFFTLVHFPQEHITLLWDQRTTVHVQAGPQWQGQLAGLCGNFDLKTINEMRTPENLELTNPQEFGSSWAAVECPDTLDPRDMCVLNPLREPFAKKECSILLSEVFEICHPVVDVTWFYSNCLTDTCGCSQGGDCECFCASVSAYAHQCCQHGVAVDWRTPRLCPYDCDFFNKVLGKGPYQLSSLAAGGALVGMKAVGDDIVLVRTEDVAPADIVSFLLTAALYKAKAHDPDVVSLEAADRPNFFLHVTANGSLELAKWQGRDTFQQHASFLLHRGTRQAGLVALESLAKPSSFLYVSGAVLALRLYEHTEVFRRGTLFRLLDAKPSGAAYPICEWRYDACASPCFQTCRDPRAASCRDVPRVEGCVPVCPTPQVLDEVTQRCVYLEDCVEPAVWVPTEALGNETLPPSQGLPTPSDEEPQLSQESPRTPTHRPALTPAAPLTTALNPPVTATEEPVVSPGPTQTTLQQPLELTASQLPAGPTESPASKGVTASLLAIPHTPESSSLPVALQTPTPGMVSGAMETTRVTVIFAGSPNITVSSRSPPAPRFPLMTKAVTVRGHGSLPVRTTPPQPSLTASPSSRPVASPGAISRSPTSSGSHKAVLTPAVTKVISRTGVPQPTQAQSASSPSTPLTVAGTAAEQVPVSPLATRSLEIVLSTEKGEAGHSQPMGSPASPQPHPLPSAPPRPAQHTTMATRSPALPPETPAAASLSTATDGLAATPFMSLESTRPSQLLSGLPPDTSLPLAKVGTSAPVATPGPKASVITTPLQPQATTLPAQTLSPVLPFTPAAMTQAHPPTHIAPPAAGTAPGLLLGATLPTSGVLPVAEGTASMVSVVPRKSTTGKVAILSKQVSLPTSMYGSAEGGPTELTPATSHPLTPLVAEPEGAQAGTALPVPTSYALSRVSARTAPQDSMLVLLPQLAEAHGTSAGPHLAAEPVDEATTEPSGRSAPALSIVEGLAEALATTTEANTSTTCVPIAEQDCVRHICLEGQLIRVNQSQHCPQGAAPPRCGILGLAVRVGGDRCCPLWECACRCSIFPDLSFVTFDGSHVALFKEAIYILSQSPDEMLTVHVLDCKSANLGHLNWPPFCLVMLNMTHLAHQVTIDRFNRKVTVDLQPVWPPVSRYGFRIEDTGHMYMILTPSDIQIQWLHSSGLMIVEASKTSKAQGHGLCGICDGDAANDLTLKDGSVVGGAEDPAPFLDSWQVPSSLTSVGQTRFRPDSCATTDCSPCLRMVSNRTFSACHRFVPPESFCELWIRDTKYVQQPCVALTVYVAMCHKFHVCIEWRRSDYCPFLCSSDSTYQACVTACEPPKTCQDGILGPLDPEHCQVLGEGCVCSEGTILHRRHSALCIPEAKCACTDSMGVPRALGETWNSSLSGCCQHQCQAPDTIVPVDLGCPSPRPESCLRFGEVALLLPTKDPCCLGTVCVCNQTLCEGLAPTCRPGHRLLTHFQEDSCCPSYSCECDPDLCEAELVPSCRQDQILITGRLGDSCCTSYFCACGDCPDSIPECQEGEALTVHRNTTELCCPLYQCVCENFRCPQVQCGLGTALVEVWSPDRCCPYKSCECDCDTIPVPRCHLWEKSQLDEEFMHSVENVCGCAKYECVKAPVCLSRELGVMQPGQTVVELSADGVCHTSRCTTVLDPLTNFYQINTTSVLCDIHCEANQEYEHPRDLAACCGSCRNVSCLFTFPNGTTSLFLPGASWIADCARHHCSSTPLGAVLVRSPISCPPLNETECAKVGGSVVPSLEGCCRTCKEDGRSCKKVTIRMTIRKNECRSSTPVNLVSCDGRCPSASIYNYNINTYARFCKCCREVGLQRRSVQLFCATNATWVPYTVQEPTDCACQWS</sequence>
<organism>
    <name type="scientific">Homo sapiens</name>
    <name type="common">Human</name>
    <dbReference type="NCBI Taxonomy" id="9606"/>
    <lineage>
        <taxon>Eukaryota</taxon>
        <taxon>Metazoa</taxon>
        <taxon>Chordata</taxon>
        <taxon>Craniata</taxon>
        <taxon>Vertebrata</taxon>
        <taxon>Euteleostomi</taxon>
        <taxon>Mammalia</taxon>
        <taxon>Eutheria</taxon>
        <taxon>Euarchontoglires</taxon>
        <taxon>Primates</taxon>
        <taxon>Haplorrhini</taxon>
        <taxon>Catarrhini</taxon>
        <taxon>Hominidae</taxon>
        <taxon>Homo</taxon>
    </lineage>
</organism>
<proteinExistence type="evidence at protein level"/>
<dbReference type="EMBL" id="AK128214">
    <property type="protein sequence ID" value="BAC87330.1"/>
    <property type="molecule type" value="mRNA"/>
</dbReference>
<dbReference type="EMBL" id="AC124799">
    <property type="status" value="NOT_ANNOTATED_CDS"/>
    <property type="molecule type" value="Genomic_DNA"/>
</dbReference>
<dbReference type="CCDS" id="CCDS76390.1">
    <molecule id="Q6ZRI0-1"/>
</dbReference>
<dbReference type="RefSeq" id="NP_001264198.1">
    <molecule id="Q6ZRI0-1"/>
    <property type="nucleotide sequence ID" value="NM_001277269.2"/>
</dbReference>
<dbReference type="SMR" id="Q6ZRI0"/>
<dbReference type="BioGRID" id="131110">
    <property type="interactions" value="9"/>
</dbReference>
<dbReference type="FunCoup" id="Q6ZRI0">
    <property type="interactions" value="77"/>
</dbReference>
<dbReference type="IntAct" id="Q6ZRI0">
    <property type="interactions" value="7"/>
</dbReference>
<dbReference type="STRING" id="9606.ENSP00000382323"/>
<dbReference type="CarbonylDB" id="Q6ZRI0"/>
<dbReference type="GlyCosmos" id="Q6ZRI0">
    <property type="glycosylation" value="5 sites, 1 glycan"/>
</dbReference>
<dbReference type="GlyGen" id="Q6ZRI0">
    <property type="glycosylation" value="12 sites, 1 O-linked glycan (2 sites)"/>
</dbReference>
<dbReference type="iPTMnet" id="Q6ZRI0"/>
<dbReference type="PhosphoSitePlus" id="Q6ZRI0"/>
<dbReference type="BioMuta" id="OTOG"/>
<dbReference type="DMDM" id="215274227"/>
<dbReference type="jPOST" id="Q6ZRI0"/>
<dbReference type="MassIVE" id="Q6ZRI0"/>
<dbReference type="PaxDb" id="9606-ENSP00000382323"/>
<dbReference type="PeptideAtlas" id="Q6ZRI0"/>
<dbReference type="Antibodypedia" id="77421">
    <property type="antibodies" value="6 antibodies from 3 providers"/>
</dbReference>
<dbReference type="DNASU" id="340990"/>
<dbReference type="Ensembl" id="ENST00000399391.7">
    <molecule id="Q6ZRI0-1"/>
    <property type="protein sequence ID" value="ENSP00000382323.2"/>
    <property type="gene ID" value="ENSG00000188162.12"/>
</dbReference>
<dbReference type="GeneID" id="340990"/>
<dbReference type="KEGG" id="hsa:340990"/>
<dbReference type="UCSC" id="uc001mnh.1">
    <molecule id="Q6ZRI0-1"/>
    <property type="organism name" value="human"/>
</dbReference>
<dbReference type="AGR" id="HGNC:8516"/>
<dbReference type="CTD" id="340990"/>
<dbReference type="DisGeNET" id="340990"/>
<dbReference type="GeneCards" id="OTOG"/>
<dbReference type="HGNC" id="HGNC:8516">
    <property type="gene designation" value="OTOG"/>
</dbReference>
<dbReference type="HPA" id="ENSG00000188162">
    <property type="expression patterns" value="Tissue enhanced (pituitary)"/>
</dbReference>
<dbReference type="MalaCards" id="OTOG"/>
<dbReference type="MIM" id="604487">
    <property type="type" value="gene"/>
</dbReference>
<dbReference type="MIM" id="614945">
    <property type="type" value="phenotype"/>
</dbReference>
<dbReference type="neXtProt" id="NX_Q6ZRI0"/>
<dbReference type="OpenTargets" id="ENSG00000188162"/>
<dbReference type="Orphanet" id="90636">
    <property type="disease" value="Rare autosomal recessive non-syndromic sensorineural deafness type DFNB"/>
</dbReference>
<dbReference type="VEuPathDB" id="HostDB:ENSG00000188162"/>
<dbReference type="eggNOG" id="KOG1216">
    <property type="taxonomic scope" value="Eukaryota"/>
</dbReference>
<dbReference type="GeneTree" id="ENSGT00940000157490"/>
<dbReference type="HOGENOM" id="CLU_248357_0_0_1"/>
<dbReference type="InParanoid" id="Q6ZRI0"/>
<dbReference type="OrthoDB" id="6236007at2759"/>
<dbReference type="PAN-GO" id="Q6ZRI0">
    <property type="GO annotations" value="2 GO annotations based on evolutionary models"/>
</dbReference>
<dbReference type="PhylomeDB" id="Q6ZRI0"/>
<dbReference type="TreeFam" id="TF300299"/>
<dbReference type="PathwayCommons" id="Q6ZRI0"/>
<dbReference type="Reactome" id="R-HSA-9662361">
    <property type="pathway name" value="Sensory processing of sound by outer hair cells of the cochlea"/>
</dbReference>
<dbReference type="BioGRID-ORCS" id="340990">
    <property type="hits" value="6 hits in 1098 CRISPR screens"/>
</dbReference>
<dbReference type="ChiTaRS" id="OTOG">
    <property type="organism name" value="human"/>
</dbReference>
<dbReference type="GenomeRNAi" id="340990"/>
<dbReference type="Pharos" id="Q6ZRI0">
    <property type="development level" value="Tdark"/>
</dbReference>
<dbReference type="PRO" id="PR:Q6ZRI0"/>
<dbReference type="Proteomes" id="UP000005640">
    <property type="component" value="Chromosome 11"/>
</dbReference>
<dbReference type="RNAct" id="Q6ZRI0">
    <property type="molecule type" value="protein"/>
</dbReference>
<dbReference type="Bgee" id="ENSG00000188162">
    <property type="expression patterns" value="Expressed in primordial germ cell in gonad and 19 other cell types or tissues"/>
</dbReference>
<dbReference type="ExpressionAtlas" id="Q6ZRI0">
    <property type="expression patterns" value="baseline and differential"/>
</dbReference>
<dbReference type="GO" id="GO:0016324">
    <property type="term" value="C:apical plasma membrane"/>
    <property type="evidence" value="ECO:0007669"/>
    <property type="project" value="UniProtKB-SubCell"/>
</dbReference>
<dbReference type="GO" id="GO:0031012">
    <property type="term" value="C:extracellular matrix"/>
    <property type="evidence" value="ECO:0000318"/>
    <property type="project" value="GO_Central"/>
</dbReference>
<dbReference type="GO" id="GO:0005615">
    <property type="term" value="C:extracellular space"/>
    <property type="evidence" value="ECO:0000318"/>
    <property type="project" value="GO_Central"/>
</dbReference>
<dbReference type="GO" id="GO:0046556">
    <property type="term" value="F:alpha-L-arabinofuranosidase activity"/>
    <property type="evidence" value="ECO:0007669"/>
    <property type="project" value="InterPro"/>
</dbReference>
<dbReference type="GO" id="GO:0046373">
    <property type="term" value="P:L-arabinose metabolic process"/>
    <property type="evidence" value="ECO:0007669"/>
    <property type="project" value="InterPro"/>
</dbReference>
<dbReference type="GO" id="GO:0007399">
    <property type="term" value="P:nervous system development"/>
    <property type="evidence" value="ECO:0007669"/>
    <property type="project" value="UniProtKB-ARBA"/>
</dbReference>
<dbReference type="CDD" id="cd23400">
    <property type="entry name" value="beta-trefoil_ABD_OTOG"/>
    <property type="match status" value="1"/>
</dbReference>
<dbReference type="CDD" id="cd19941">
    <property type="entry name" value="TIL"/>
    <property type="match status" value="4"/>
</dbReference>
<dbReference type="FunFam" id="2.10.25.10:FF:000397">
    <property type="entry name" value="Otogelin"/>
    <property type="match status" value="1"/>
</dbReference>
<dbReference type="FunFam" id="2.10.25.10:FF:001017">
    <property type="entry name" value="Otogelin"/>
    <property type="match status" value="1"/>
</dbReference>
<dbReference type="FunFam" id="2.10.25.10:FF:000531">
    <property type="entry name" value="otogelin"/>
    <property type="match status" value="1"/>
</dbReference>
<dbReference type="Gene3D" id="2.80.10.50">
    <property type="match status" value="1"/>
</dbReference>
<dbReference type="Gene3D" id="2.10.25.10">
    <property type="entry name" value="Laminin"/>
    <property type="match status" value="3"/>
</dbReference>
<dbReference type="InterPro" id="IPR007934">
    <property type="entry name" value="AbfB_ABD"/>
</dbReference>
<dbReference type="InterPro" id="IPR036195">
    <property type="entry name" value="AbfB_ABD_sf"/>
</dbReference>
<dbReference type="InterPro" id="IPR006207">
    <property type="entry name" value="Cys_knot_C"/>
</dbReference>
<dbReference type="InterPro" id="IPR000742">
    <property type="entry name" value="EGF-like_dom"/>
</dbReference>
<dbReference type="InterPro" id="IPR050780">
    <property type="entry name" value="Mucin_vWF_Thrombospondin_sf"/>
</dbReference>
<dbReference type="InterPro" id="IPR036084">
    <property type="entry name" value="Ser_inhib-like_sf"/>
</dbReference>
<dbReference type="InterPro" id="IPR002919">
    <property type="entry name" value="TIL_dom"/>
</dbReference>
<dbReference type="InterPro" id="IPR014853">
    <property type="entry name" value="VWF/SSPO/ZAN-like_Cys-rich_dom"/>
</dbReference>
<dbReference type="InterPro" id="IPR001007">
    <property type="entry name" value="VWF_dom"/>
</dbReference>
<dbReference type="InterPro" id="IPR001846">
    <property type="entry name" value="VWF_type-D"/>
</dbReference>
<dbReference type="PANTHER" id="PTHR11339">
    <property type="entry name" value="EXTRACELLULAR MATRIX GLYCOPROTEIN RELATED"/>
    <property type="match status" value="1"/>
</dbReference>
<dbReference type="PANTHER" id="PTHR11339:SF228">
    <property type="entry name" value="OTOGELIN"/>
    <property type="match status" value="1"/>
</dbReference>
<dbReference type="Pfam" id="PF05270">
    <property type="entry name" value="AbfB"/>
    <property type="match status" value="1"/>
</dbReference>
<dbReference type="Pfam" id="PF08742">
    <property type="entry name" value="C8"/>
    <property type="match status" value="4"/>
</dbReference>
<dbReference type="Pfam" id="PF01826">
    <property type="entry name" value="TIL"/>
    <property type="match status" value="1"/>
</dbReference>
<dbReference type="Pfam" id="PF00094">
    <property type="entry name" value="VWD"/>
    <property type="match status" value="4"/>
</dbReference>
<dbReference type="Pfam" id="PF23244">
    <property type="entry name" value="VWF"/>
    <property type="match status" value="1"/>
</dbReference>
<dbReference type="SMART" id="SM00832">
    <property type="entry name" value="C8"/>
    <property type="match status" value="4"/>
</dbReference>
<dbReference type="SMART" id="SM00041">
    <property type="entry name" value="CT"/>
    <property type="match status" value="1"/>
</dbReference>
<dbReference type="SMART" id="SM00215">
    <property type="entry name" value="VWC_out"/>
    <property type="match status" value="2"/>
</dbReference>
<dbReference type="SMART" id="SM00216">
    <property type="entry name" value="VWD"/>
    <property type="match status" value="4"/>
</dbReference>
<dbReference type="SUPFAM" id="SSF110221">
    <property type="entry name" value="AbfB domain"/>
    <property type="match status" value="1"/>
</dbReference>
<dbReference type="SUPFAM" id="SSF57603">
    <property type="entry name" value="FnI-like domain"/>
    <property type="match status" value="2"/>
</dbReference>
<dbReference type="SUPFAM" id="SSF57567">
    <property type="entry name" value="Serine protease inhibitors"/>
    <property type="match status" value="4"/>
</dbReference>
<dbReference type="PROSITE" id="PS01225">
    <property type="entry name" value="CTCK_2"/>
    <property type="match status" value="1"/>
</dbReference>
<dbReference type="PROSITE" id="PS50026">
    <property type="entry name" value="EGF_3"/>
    <property type="match status" value="1"/>
</dbReference>
<dbReference type="PROSITE" id="PS51233">
    <property type="entry name" value="VWFD"/>
    <property type="match status" value="4"/>
</dbReference>
<name>OTOG_HUMAN</name>
<comment type="function">
    <text evidence="1">Glycoprotein specific to acellular membranes of the inner ear. May be required for the anchoring of the otoconial membranes and cupulae to the underlying neuroepithelia in the vestibule. May be involved in the organization and/or stabilization of the fibrillar network that compose the tectorial membrane in the cochlea. May play a role in mechanotransduction processes (By similarity).</text>
</comment>
<comment type="subcellular location">
    <subcellularLocation>
        <location evidence="2">Apical cell membrane</location>
        <topology evidence="2">Peripheral membrane protein</topology>
        <orientation evidence="2">Extracellular side</orientation>
    </subcellularLocation>
    <subcellularLocation>
        <location evidence="2">Secreted</location>
        <location evidence="2">Extracellular space</location>
    </subcellularLocation>
    <text evidence="2">Found in fiber-like structures during the maturation process of the tectorial membrane.</text>
</comment>
<comment type="alternative products">
    <event type="alternative splicing"/>
    <isoform>
        <id>Q6ZRI0-1</id>
        <name>1</name>
        <sequence type="displayed"/>
    </isoform>
    <isoform>
        <id>Q6ZRI0-2</id>
        <name>2</name>
        <sequence type="described" ref="VSP_029709 VSP_029710 VSP_029711 VSP_029712 VSP_029713 VSP_029714"/>
    </isoform>
</comment>
<comment type="PTM">
    <text evidence="1">N-glycosylated. Not O-glycosylated.</text>
</comment>
<comment type="disease" evidence="8">
    <disease id="DI-03621">
        <name>Deafness, autosomal recessive, 18B</name>
        <acronym>DFNB18B</acronym>
        <description>A form of non-syndromic deafness characterized by a moderate hearing impairment, which can be associated with vestibular dysfunction, and a flat to shallow 'U' or slightly downsloping shaped audiograms.</description>
        <dbReference type="MIM" id="614945"/>
    </disease>
    <text>The disease is caused by variants affecting the gene represented in this entry.</text>
</comment>
<comment type="similarity">
    <text evidence="11">Belongs to the otogelin family.</text>
</comment>